<proteinExistence type="evidence at protein level"/>
<reference key="1">
    <citation type="journal article" date="1988" name="Protein Eng.">
        <title>Selenocysteine's mechanism of incorporation and evolution revealed in cDNAs of three glutathione peroxidases.</title>
        <authorList>
            <person name="Mullenbach G.T."/>
            <person name="Tabrizi A."/>
            <person name="Irvine B.D."/>
            <person name="Bell G.I."/>
            <person name="Tainer J.A."/>
            <person name="Hallewell R.A."/>
        </authorList>
    </citation>
    <scope>NUCLEOTIDE SEQUENCE [MRNA]</scope>
    <source>
        <tissue>Pituitary</tissue>
    </source>
</reference>
<reference key="2">
    <citation type="submission" date="2007-07" db="EMBL/GenBank/DDBJ databases">
        <authorList>
            <consortium name="NIH - Mammalian Gene Collection (MGC) project"/>
        </authorList>
    </citation>
    <scope>NUCLEOTIDE SEQUENCE [LARGE SCALE MRNA]</scope>
    <source>
        <strain>Crossbred X Angus</strain>
        <tissue>Liver</tissue>
    </source>
</reference>
<reference key="3">
    <citation type="journal article" date="1984" name="Hoppe-Seyler's Z. Physiol. Chem.">
        <title>The amino-acid sequence of bovine glutathione peroxidase.</title>
        <authorList>
            <person name="Gunzler W.A."/>
            <person name="Steffens G.J."/>
            <person name="Grossmann A."/>
            <person name="Kim S.-M.A."/>
            <person name="Otting F."/>
            <person name="Wendel A."/>
            <person name="Flohe L."/>
        </authorList>
    </citation>
    <scope>PROTEIN SEQUENCE OF 8-205</scope>
    <source>
        <tissue>Erythrocyte</tissue>
    </source>
</reference>
<reference key="4">
    <citation type="journal article" date="1995" name="Biochim. Biophys. Acta">
        <title>Identification of the site of non-enzymatic glycation of glutathione peroxidase: rationalization of the glycation-related catalytic alterations on the basis of three-dimensional protein structure.</title>
        <authorList>
            <person name="Baldwin J.S."/>
            <person name="Lee L."/>
            <person name="Leung T.K."/>
            <person name="Muruganandam A."/>
            <person name="Mutus B."/>
        </authorList>
    </citation>
    <scope>GLYCATION AT LYS-117</scope>
    <scope>LACK OF GLYCATION AT LYS-41; LYS-91; LYS-100; LYS-124; LYS-151; LYS-169</scope>
</reference>
<reference key="5">
    <citation type="journal article" date="1983" name="Eur. J. Biochem.">
        <title>The refined structure of the selenoenzyme glutathione peroxidase at 0.2-nm resolution.</title>
        <authorList>
            <person name="Epp O."/>
            <person name="Ladenstein R."/>
            <person name="Wendel A."/>
        </authorList>
    </citation>
    <scope>X-RAY CRYSTALLOGRAPHY (2.0 ANGSTROMS)</scope>
</reference>
<keyword id="KW-0002">3D-structure</keyword>
<keyword id="KW-0007">Acetylation</keyword>
<keyword id="KW-0963">Cytoplasm</keyword>
<keyword id="KW-0903">Direct protein sequencing</keyword>
<keyword id="KW-0971">Glycation</keyword>
<keyword id="KW-0325">Glycoprotein</keyword>
<keyword id="KW-0443">Lipid metabolism</keyword>
<keyword id="KW-0496">Mitochondrion</keyword>
<keyword id="KW-0560">Oxidoreductase</keyword>
<keyword id="KW-0575">Peroxidase</keyword>
<keyword id="KW-0597">Phosphoprotein</keyword>
<keyword id="KW-1185">Reference proteome</keyword>
<keyword id="KW-0712">Selenocysteine</keyword>
<evidence type="ECO:0000250" key="1"/>
<evidence type="ECO:0000250" key="2">
    <source>
        <dbReference type="UniProtKB" id="O70325"/>
    </source>
</evidence>
<evidence type="ECO:0000250" key="3">
    <source>
        <dbReference type="UniProtKB" id="P04041"/>
    </source>
</evidence>
<evidence type="ECO:0000250" key="4">
    <source>
        <dbReference type="UniProtKB" id="P07203"/>
    </source>
</evidence>
<evidence type="ECO:0000250" key="5">
    <source>
        <dbReference type="UniProtKB" id="P11352"/>
    </source>
</evidence>
<evidence type="ECO:0000269" key="6">
    <source>
    </source>
</evidence>
<evidence type="ECO:0000305" key="7"/>
<evidence type="ECO:0007829" key="8">
    <source>
        <dbReference type="PDB" id="1GP1"/>
    </source>
</evidence>
<accession>P00435</accession>
<accession>A6QPG3</accession>
<dbReference type="EC" id="1.11.1.9" evidence="4"/>
<dbReference type="EC" id="1.11.1.12" evidence="4"/>
<dbReference type="EMBL" id="X13684">
    <property type="protein sequence ID" value="CAB40806.1"/>
    <property type="molecule type" value="mRNA"/>
</dbReference>
<dbReference type="EMBL" id="BC149308">
    <property type="protein sequence ID" value="AAI49309.1"/>
    <property type="molecule type" value="mRNA"/>
</dbReference>
<dbReference type="PIR" id="S04872">
    <property type="entry name" value="OPBOE"/>
</dbReference>
<dbReference type="RefSeq" id="NP_776501.1">
    <property type="nucleotide sequence ID" value="NM_174076.3"/>
</dbReference>
<dbReference type="PDB" id="1GP1">
    <property type="method" value="X-ray"/>
    <property type="resolution" value="2.00 A"/>
    <property type="chains" value="A/B=8-205"/>
</dbReference>
<dbReference type="PDBsum" id="1GP1"/>
<dbReference type="SMR" id="P00435"/>
<dbReference type="BioGRID" id="158568">
    <property type="interactions" value="2"/>
</dbReference>
<dbReference type="FunCoup" id="P00435">
    <property type="interactions" value="1145"/>
</dbReference>
<dbReference type="STRING" id="9913.ENSBTAP00000061122"/>
<dbReference type="PeroxiBase" id="3635">
    <property type="entry name" value="BtGPx01"/>
</dbReference>
<dbReference type="CarbonylDB" id="P00435"/>
<dbReference type="GlyCosmos" id="P00435">
    <property type="glycosylation" value="1 site, No reported glycans"/>
</dbReference>
<dbReference type="PeptideAtlas" id="P00435"/>
<dbReference type="Ensembl" id="ENSBTAT00000080370.2">
    <property type="protein sequence ID" value="ENSBTAP00000061122.1"/>
    <property type="gene ID" value="ENSBTAG00000054195.2"/>
</dbReference>
<dbReference type="GeneID" id="281209"/>
<dbReference type="KEGG" id="bta:281209"/>
<dbReference type="CTD" id="2876"/>
<dbReference type="VEuPathDB" id="HostDB:ENSBTAG00000054195"/>
<dbReference type="VGNC" id="VGNC:109407">
    <property type="gene designation" value="GPX1"/>
</dbReference>
<dbReference type="GeneTree" id="ENSGT00940000156150"/>
<dbReference type="InParanoid" id="P00435"/>
<dbReference type="OMA" id="RDYTEMN"/>
<dbReference type="OrthoDB" id="446890at2759"/>
<dbReference type="BRENDA" id="1.11.1.9">
    <property type="organism ID" value="908"/>
</dbReference>
<dbReference type="Reactome" id="R-BTA-2142712">
    <property type="pathway name" value="Synthesis of 12-eicosatetraenoic acid derivatives"/>
</dbReference>
<dbReference type="Reactome" id="R-BTA-3299685">
    <property type="pathway name" value="Detoxification of Reactive Oxygen Species"/>
</dbReference>
<dbReference type="EvolutionaryTrace" id="P00435"/>
<dbReference type="Proteomes" id="UP000009136">
    <property type="component" value="Chromosome 22"/>
</dbReference>
<dbReference type="Bgee" id="ENSBTAG00000054195">
    <property type="expression patterns" value="Expressed in granulosa cell and 107 other cell types or tissues"/>
</dbReference>
<dbReference type="GO" id="GO:0005829">
    <property type="term" value="C:cytosol"/>
    <property type="evidence" value="ECO:0000250"/>
    <property type="project" value="UniProtKB"/>
</dbReference>
<dbReference type="GO" id="GO:0097413">
    <property type="term" value="C:Lewy body"/>
    <property type="evidence" value="ECO:0007669"/>
    <property type="project" value="Ensembl"/>
</dbReference>
<dbReference type="GO" id="GO:0005739">
    <property type="term" value="C:mitochondrion"/>
    <property type="evidence" value="ECO:0000318"/>
    <property type="project" value="GO_Central"/>
</dbReference>
<dbReference type="GO" id="GO:0004602">
    <property type="term" value="F:glutathione peroxidase activity"/>
    <property type="evidence" value="ECO:0000314"/>
    <property type="project" value="ParkinsonsUK-UCL"/>
</dbReference>
<dbReference type="GO" id="GO:0047066">
    <property type="term" value="F:phospholipid-hydroperoxide glutathione peroxidase activity"/>
    <property type="evidence" value="ECO:0000250"/>
    <property type="project" value="UniProtKB"/>
</dbReference>
<dbReference type="GO" id="GO:1990782">
    <property type="term" value="F:protein tyrosine kinase binding"/>
    <property type="evidence" value="ECO:0007669"/>
    <property type="project" value="Ensembl"/>
</dbReference>
<dbReference type="GO" id="GO:0017124">
    <property type="term" value="F:SH3 domain binding"/>
    <property type="evidence" value="ECO:0007669"/>
    <property type="project" value="Ensembl"/>
</dbReference>
<dbReference type="GO" id="GO:0060055">
    <property type="term" value="P:angiogenesis involved in wound healing"/>
    <property type="evidence" value="ECO:0007669"/>
    <property type="project" value="Ensembl"/>
</dbReference>
<dbReference type="GO" id="GO:0019369">
    <property type="term" value="P:arachidonate metabolic process"/>
    <property type="evidence" value="ECO:0000250"/>
    <property type="project" value="UniProtKB"/>
</dbReference>
<dbReference type="GO" id="GO:0051702">
    <property type="term" value="P:biological process involved in interaction with symbiont"/>
    <property type="evidence" value="ECO:0007669"/>
    <property type="project" value="Ensembl"/>
</dbReference>
<dbReference type="GO" id="GO:0043534">
    <property type="term" value="P:blood vessel endothelial cell migration"/>
    <property type="evidence" value="ECO:0007669"/>
    <property type="project" value="Ensembl"/>
</dbReference>
<dbReference type="GO" id="GO:0045454">
    <property type="term" value="P:cell redox homeostasis"/>
    <property type="evidence" value="ECO:0007669"/>
    <property type="project" value="Ensembl"/>
</dbReference>
<dbReference type="GO" id="GO:0034599">
    <property type="term" value="P:cellular response to oxidative stress"/>
    <property type="evidence" value="ECO:0007669"/>
    <property type="project" value="Ensembl"/>
</dbReference>
<dbReference type="GO" id="GO:0001885">
    <property type="term" value="P:endothelial cell development"/>
    <property type="evidence" value="ECO:0007669"/>
    <property type="project" value="Ensembl"/>
</dbReference>
<dbReference type="GO" id="GO:0040029">
    <property type="term" value="P:epigenetic regulation of gene expression"/>
    <property type="evidence" value="ECO:0007669"/>
    <property type="project" value="Ensembl"/>
</dbReference>
<dbReference type="GO" id="GO:0045444">
    <property type="term" value="P:fat cell differentiation"/>
    <property type="evidence" value="ECO:0007669"/>
    <property type="project" value="Ensembl"/>
</dbReference>
<dbReference type="GO" id="GO:0048144">
    <property type="term" value="P:fibroblast proliferation"/>
    <property type="evidence" value="ECO:0007669"/>
    <property type="project" value="Ensembl"/>
</dbReference>
<dbReference type="GO" id="GO:0006749">
    <property type="term" value="P:glutathione metabolic process"/>
    <property type="evidence" value="ECO:0000314"/>
    <property type="project" value="ParkinsonsUK-UCL"/>
</dbReference>
<dbReference type="GO" id="GO:0060047">
    <property type="term" value="P:heart contraction"/>
    <property type="evidence" value="ECO:0007669"/>
    <property type="project" value="Ensembl"/>
</dbReference>
<dbReference type="GO" id="GO:0042744">
    <property type="term" value="P:hydrogen peroxide catabolic process"/>
    <property type="evidence" value="ECO:0000314"/>
    <property type="project" value="ParkinsonsUK-UCL"/>
</dbReference>
<dbReference type="GO" id="GO:0008631">
    <property type="term" value="P:intrinsic apoptotic signaling pathway in response to oxidative stress"/>
    <property type="evidence" value="ECO:0007669"/>
    <property type="project" value="Ensembl"/>
</dbReference>
<dbReference type="GO" id="GO:0019372">
    <property type="term" value="P:lipoxygenase pathway"/>
    <property type="evidence" value="ECO:0000250"/>
    <property type="project" value="UniProtKB"/>
</dbReference>
<dbReference type="GO" id="GO:0045445">
    <property type="term" value="P:myoblast differentiation"/>
    <property type="evidence" value="ECO:0007669"/>
    <property type="project" value="Ensembl"/>
</dbReference>
<dbReference type="GO" id="GO:0051450">
    <property type="term" value="P:myoblast proliferation"/>
    <property type="evidence" value="ECO:0007669"/>
    <property type="project" value="Ensembl"/>
</dbReference>
<dbReference type="GO" id="GO:1902042">
    <property type="term" value="P:negative regulation of extrinsic apoptotic signaling pathway via death domain receptors"/>
    <property type="evidence" value="ECO:0007669"/>
    <property type="project" value="Ensembl"/>
</dbReference>
<dbReference type="GO" id="GO:0002862">
    <property type="term" value="P:negative regulation of inflammatory response to antigenic stimulus"/>
    <property type="evidence" value="ECO:0007669"/>
    <property type="project" value="Ensembl"/>
</dbReference>
<dbReference type="GO" id="GO:1902176">
    <property type="term" value="P:negative regulation of oxidative stress-induced intrinsic apoptotic signaling pathway"/>
    <property type="evidence" value="ECO:0007669"/>
    <property type="project" value="Ensembl"/>
</dbReference>
<dbReference type="GO" id="GO:0090201">
    <property type="term" value="P:negative regulation of release of cytochrome c from mitochondria"/>
    <property type="evidence" value="ECO:0007669"/>
    <property type="project" value="Ensembl"/>
</dbReference>
<dbReference type="GO" id="GO:0051402">
    <property type="term" value="P:neuron apoptotic process"/>
    <property type="evidence" value="ECO:0007669"/>
    <property type="project" value="Ensembl"/>
</dbReference>
<dbReference type="GO" id="GO:0051897">
    <property type="term" value="P:positive regulation of phosphatidylinositol 3-kinase/protein kinase B signal transduction"/>
    <property type="evidence" value="ECO:0007669"/>
    <property type="project" value="Ensembl"/>
</dbReference>
<dbReference type="GO" id="GO:1902905">
    <property type="term" value="P:positive regulation of supramolecular fiber organization"/>
    <property type="evidence" value="ECO:0000314"/>
    <property type="project" value="ParkinsonsUK-UCL"/>
</dbReference>
<dbReference type="GO" id="GO:0033599">
    <property type="term" value="P:regulation of mammary gland epithelial cell proliferation"/>
    <property type="evidence" value="ECO:0007669"/>
    <property type="project" value="Ensembl"/>
</dbReference>
<dbReference type="GO" id="GO:0061136">
    <property type="term" value="P:regulation of proteasomal protein catabolic process"/>
    <property type="evidence" value="ECO:0007669"/>
    <property type="project" value="Ensembl"/>
</dbReference>
<dbReference type="GO" id="GO:0010332">
    <property type="term" value="P:response to gamma radiation"/>
    <property type="evidence" value="ECO:0007669"/>
    <property type="project" value="Ensembl"/>
</dbReference>
<dbReference type="GO" id="GO:0042542">
    <property type="term" value="P:response to hydrogen peroxide"/>
    <property type="evidence" value="ECO:0000318"/>
    <property type="project" value="GO_Central"/>
</dbReference>
<dbReference type="GO" id="GO:0033194">
    <property type="term" value="P:response to hydroperoxide"/>
    <property type="evidence" value="ECO:0007669"/>
    <property type="project" value="Ensembl"/>
</dbReference>
<dbReference type="GO" id="GO:0032496">
    <property type="term" value="P:response to lipopolysaccharide"/>
    <property type="evidence" value="ECO:0007669"/>
    <property type="project" value="Ensembl"/>
</dbReference>
<dbReference type="GO" id="GO:0010269">
    <property type="term" value="P:response to selenium ion"/>
    <property type="evidence" value="ECO:0000318"/>
    <property type="project" value="GO_Central"/>
</dbReference>
<dbReference type="GO" id="GO:0009609">
    <property type="term" value="P:response to symbiotic bacterium"/>
    <property type="evidence" value="ECO:0007669"/>
    <property type="project" value="Ensembl"/>
</dbReference>
<dbReference type="GO" id="GO:0009410">
    <property type="term" value="P:response to xenobiotic stimulus"/>
    <property type="evidence" value="ECO:0007669"/>
    <property type="project" value="Ensembl"/>
</dbReference>
<dbReference type="GO" id="GO:0007605">
    <property type="term" value="P:sensory perception of sound"/>
    <property type="evidence" value="ECO:0007669"/>
    <property type="project" value="Ensembl"/>
</dbReference>
<dbReference type="GO" id="GO:0048741">
    <property type="term" value="P:skeletal muscle fiber development"/>
    <property type="evidence" value="ECO:0007669"/>
    <property type="project" value="Ensembl"/>
</dbReference>
<dbReference type="GO" id="GO:0043403">
    <property type="term" value="P:skeletal muscle tissue regeneration"/>
    <property type="evidence" value="ECO:0007669"/>
    <property type="project" value="Ensembl"/>
</dbReference>
<dbReference type="GO" id="GO:0001659">
    <property type="term" value="P:temperature homeostasis"/>
    <property type="evidence" value="ECO:0007669"/>
    <property type="project" value="Ensembl"/>
</dbReference>
<dbReference type="GO" id="GO:0006641">
    <property type="term" value="P:triglyceride metabolic process"/>
    <property type="evidence" value="ECO:0007669"/>
    <property type="project" value="Ensembl"/>
</dbReference>
<dbReference type="GO" id="GO:0009650">
    <property type="term" value="P:UV protection"/>
    <property type="evidence" value="ECO:0007669"/>
    <property type="project" value="Ensembl"/>
</dbReference>
<dbReference type="GO" id="GO:0042311">
    <property type="term" value="P:vasodilation"/>
    <property type="evidence" value="ECO:0007669"/>
    <property type="project" value="Ensembl"/>
</dbReference>
<dbReference type="CDD" id="cd00340">
    <property type="entry name" value="GSH_Peroxidase"/>
    <property type="match status" value="1"/>
</dbReference>
<dbReference type="FunFam" id="3.40.30.10:FF:000153">
    <property type="entry name" value="Glutathione peroxidase"/>
    <property type="match status" value="1"/>
</dbReference>
<dbReference type="Gene3D" id="3.40.30.10">
    <property type="entry name" value="Glutaredoxin"/>
    <property type="match status" value="1"/>
</dbReference>
<dbReference type="InterPro" id="IPR000889">
    <property type="entry name" value="Glutathione_peroxidase"/>
</dbReference>
<dbReference type="InterPro" id="IPR029759">
    <property type="entry name" value="GPX_AS"/>
</dbReference>
<dbReference type="InterPro" id="IPR029760">
    <property type="entry name" value="GPX_CS"/>
</dbReference>
<dbReference type="InterPro" id="IPR036249">
    <property type="entry name" value="Thioredoxin-like_sf"/>
</dbReference>
<dbReference type="PANTHER" id="PTHR11592">
    <property type="entry name" value="GLUTATHIONE PEROXIDASE"/>
    <property type="match status" value="1"/>
</dbReference>
<dbReference type="PANTHER" id="PTHR11592:SF41">
    <property type="entry name" value="GLUTATHIONE PEROXIDASE 1"/>
    <property type="match status" value="1"/>
</dbReference>
<dbReference type="Pfam" id="PF00255">
    <property type="entry name" value="GSHPx"/>
    <property type="match status" value="1"/>
</dbReference>
<dbReference type="PIRSF" id="PIRSF000303">
    <property type="entry name" value="Glutathion_perox"/>
    <property type="match status" value="1"/>
</dbReference>
<dbReference type="PRINTS" id="PR01011">
    <property type="entry name" value="GLUTPROXDASE"/>
</dbReference>
<dbReference type="SUPFAM" id="SSF52833">
    <property type="entry name" value="Thioredoxin-like"/>
    <property type="match status" value="1"/>
</dbReference>
<dbReference type="PROSITE" id="PS00460">
    <property type="entry name" value="GLUTATHIONE_PEROXID_1"/>
    <property type="match status" value="1"/>
</dbReference>
<dbReference type="PROSITE" id="PS00763">
    <property type="entry name" value="GLUTATHIONE_PEROXID_2"/>
    <property type="match status" value="1"/>
</dbReference>
<dbReference type="PROSITE" id="PS51355">
    <property type="entry name" value="GLUTATHIONE_PEROXID_3"/>
    <property type="match status" value="1"/>
</dbReference>
<name>GPX1_BOVIN</name>
<gene>
    <name type="primary">GPX1</name>
</gene>
<comment type="function">
    <text evidence="5">Catalyzes the reduction of hydroperoxides in a glutathione-dependent manner thus regulating cellular redox homeostasis. Can reduce small soluble hydroperoxides such as H2O2, cumene hydroperoxide and tert-butyl hydroperoxide, as well as several fatty acid-derived hydroperoxides. In platelets catalyzes the reduction of 12-hydroperoxyeicosatetraenoic acid, the primary product of the arachidonate 12-lipoxygenase pathway.</text>
</comment>
<comment type="catalytic activity">
    <reaction evidence="5">
        <text>2 glutathione + H2O2 = glutathione disulfide + 2 H2O</text>
        <dbReference type="Rhea" id="RHEA:16833"/>
        <dbReference type="ChEBI" id="CHEBI:15377"/>
        <dbReference type="ChEBI" id="CHEBI:16240"/>
        <dbReference type="ChEBI" id="CHEBI:57925"/>
        <dbReference type="ChEBI" id="CHEBI:58297"/>
        <dbReference type="EC" id="1.11.1.9"/>
    </reaction>
    <physiologicalReaction direction="left-to-right" evidence="5">
        <dbReference type="Rhea" id="RHEA:16834"/>
    </physiologicalReaction>
</comment>
<comment type="catalytic activity">
    <reaction evidence="4">
        <text>a hydroperoxy polyunsaturated fatty acid + 2 glutathione = a hydroxy polyunsaturated fatty acid + glutathione disulfide + H2O</text>
        <dbReference type="Rhea" id="RHEA:19057"/>
        <dbReference type="ChEBI" id="CHEBI:15377"/>
        <dbReference type="ChEBI" id="CHEBI:57925"/>
        <dbReference type="ChEBI" id="CHEBI:58297"/>
        <dbReference type="ChEBI" id="CHEBI:131871"/>
        <dbReference type="ChEBI" id="CHEBI:134019"/>
        <dbReference type="EC" id="1.11.1.12"/>
    </reaction>
    <physiologicalReaction direction="left-to-right" evidence="4">
        <dbReference type="Rhea" id="RHEA:19058"/>
    </physiologicalReaction>
</comment>
<comment type="catalytic activity">
    <reaction evidence="4">
        <text>tert-butyl hydroperoxide + 2 glutathione = tert-butanol + glutathione disulfide + H2O</text>
        <dbReference type="Rhea" id="RHEA:69412"/>
        <dbReference type="ChEBI" id="CHEBI:15377"/>
        <dbReference type="ChEBI" id="CHEBI:45895"/>
        <dbReference type="ChEBI" id="CHEBI:57925"/>
        <dbReference type="ChEBI" id="CHEBI:58297"/>
        <dbReference type="ChEBI" id="CHEBI:64090"/>
    </reaction>
    <physiologicalReaction direction="left-to-right" evidence="4">
        <dbReference type="Rhea" id="RHEA:69413"/>
    </physiologicalReaction>
</comment>
<comment type="catalytic activity">
    <reaction evidence="4">
        <text>cumene hydroperoxide + 2 glutathione = 2-phenylpropan-2-ol + glutathione disulfide + H2O</text>
        <dbReference type="Rhea" id="RHEA:69651"/>
        <dbReference type="ChEBI" id="CHEBI:15377"/>
        <dbReference type="ChEBI" id="CHEBI:57925"/>
        <dbReference type="ChEBI" id="CHEBI:58297"/>
        <dbReference type="ChEBI" id="CHEBI:78673"/>
        <dbReference type="ChEBI" id="CHEBI:131607"/>
    </reaction>
    <physiologicalReaction direction="left-to-right" evidence="4">
        <dbReference type="Rhea" id="RHEA:69652"/>
    </physiologicalReaction>
</comment>
<comment type="catalytic activity">
    <reaction evidence="4">
        <text>(13S)-hydroperoxy-(9Z,11E)-octadecadienoate + 2 glutathione = (13S)-hydroxy-(9Z,11E)-octadecadienoate + glutathione disulfide + H2O</text>
        <dbReference type="Rhea" id="RHEA:48888"/>
        <dbReference type="ChEBI" id="CHEBI:15377"/>
        <dbReference type="ChEBI" id="CHEBI:57466"/>
        <dbReference type="ChEBI" id="CHEBI:57925"/>
        <dbReference type="ChEBI" id="CHEBI:58297"/>
        <dbReference type="ChEBI" id="CHEBI:90850"/>
    </reaction>
    <physiologicalReaction direction="left-to-right" evidence="4">
        <dbReference type="Rhea" id="RHEA:48889"/>
    </physiologicalReaction>
</comment>
<comment type="catalytic activity">
    <reaction evidence="4">
        <text>(9S)-hydroperoxy-(10E,12Z)-octadecadienoate + 2 glutathione = (9S)-hydroxy-(10E,12Z)-octadecadienoate + glutathione disulfide + H2O</text>
        <dbReference type="Rhea" id="RHEA:76687"/>
        <dbReference type="ChEBI" id="CHEBI:15377"/>
        <dbReference type="ChEBI" id="CHEBI:57925"/>
        <dbReference type="ChEBI" id="CHEBI:58297"/>
        <dbReference type="ChEBI" id="CHEBI:60955"/>
        <dbReference type="ChEBI" id="CHEBI:77852"/>
    </reaction>
    <physiologicalReaction direction="left-to-right" evidence="4">
        <dbReference type="Rhea" id="RHEA:76688"/>
    </physiologicalReaction>
</comment>
<comment type="catalytic activity">
    <reaction evidence="4">
        <text>(5S)-hydroperoxy-(6E,8Z,11Z,14Z)-eicosatetraenoate + 2 glutathione = (5S)-hydroxy-(6E,8Z,11Z,14Z)-eicosatetraenoate + glutathione disulfide + H2O</text>
        <dbReference type="Rhea" id="RHEA:48620"/>
        <dbReference type="ChEBI" id="CHEBI:15377"/>
        <dbReference type="ChEBI" id="CHEBI:57450"/>
        <dbReference type="ChEBI" id="CHEBI:57925"/>
        <dbReference type="ChEBI" id="CHEBI:58297"/>
        <dbReference type="ChEBI" id="CHEBI:90632"/>
    </reaction>
    <physiologicalReaction direction="left-to-right" evidence="4">
        <dbReference type="Rhea" id="RHEA:48621"/>
    </physiologicalReaction>
</comment>
<comment type="catalytic activity">
    <reaction evidence="5">
        <text>(12S)-hydroperoxy-(5Z,8Z,10E,14Z)-eicosatetraenoate + 2 glutathione = (12S)-hydroxy-(5Z,8Z,10E,14Z)-eicosatetraenoate + glutathione disulfide + H2O</text>
        <dbReference type="Rhea" id="RHEA:50708"/>
        <dbReference type="ChEBI" id="CHEBI:15377"/>
        <dbReference type="ChEBI" id="CHEBI:57444"/>
        <dbReference type="ChEBI" id="CHEBI:57925"/>
        <dbReference type="ChEBI" id="CHEBI:58297"/>
        <dbReference type="ChEBI" id="CHEBI:90680"/>
    </reaction>
    <physiologicalReaction direction="left-to-right" evidence="5">
        <dbReference type="Rhea" id="RHEA:50709"/>
    </physiologicalReaction>
</comment>
<comment type="catalytic activity">
    <reaction evidence="4">
        <text>(12R)-hydroperoxy-(5Z,8Z,10E,14Z)-eicosatetraenoate + 2 glutathione = (12R)-hydroxy-(5Z,8Z,10E,14Z)-eicosatetraenoate + glutathione disulfide + H2O</text>
        <dbReference type="Rhea" id="RHEA:76691"/>
        <dbReference type="ChEBI" id="CHEBI:15377"/>
        <dbReference type="ChEBI" id="CHEBI:57925"/>
        <dbReference type="ChEBI" id="CHEBI:58297"/>
        <dbReference type="ChEBI" id="CHEBI:75230"/>
        <dbReference type="ChEBI" id="CHEBI:83343"/>
    </reaction>
    <physiologicalReaction direction="left-to-right" evidence="4">
        <dbReference type="Rhea" id="RHEA:76692"/>
    </physiologicalReaction>
</comment>
<comment type="catalytic activity">
    <reaction evidence="4">
        <text>(15S)-hydroperoxy-(5Z,8Z,11Z,13E)-eicosatetraenoate + 2 glutathione = (15S)-hydroxy-(5Z,8Z,11Z,13E)-eicosatetraenoate + glutathione disulfide + H2O</text>
        <dbReference type="Rhea" id="RHEA:76695"/>
        <dbReference type="ChEBI" id="CHEBI:15377"/>
        <dbReference type="ChEBI" id="CHEBI:57409"/>
        <dbReference type="ChEBI" id="CHEBI:57446"/>
        <dbReference type="ChEBI" id="CHEBI:57925"/>
        <dbReference type="ChEBI" id="CHEBI:58297"/>
    </reaction>
    <physiologicalReaction direction="left-to-right" evidence="4">
        <dbReference type="Rhea" id="RHEA:76696"/>
    </physiologicalReaction>
</comment>
<comment type="catalytic activity">
    <reaction evidence="4">
        <text>(5S)-hydroperoxy-(6E,8Z,11Z,14Z,17Z)-eicosapentaenoate + 2 glutathione = (5S)-hydroxy-(6E,8Z,11Z,14Z,17Z)-eicosapentaenoate + glutathione disulfide + H2O</text>
        <dbReference type="Rhea" id="RHEA:76699"/>
        <dbReference type="ChEBI" id="CHEBI:15377"/>
        <dbReference type="ChEBI" id="CHEBI:57925"/>
        <dbReference type="ChEBI" id="CHEBI:58297"/>
        <dbReference type="ChEBI" id="CHEBI:195399"/>
        <dbReference type="ChEBI" id="CHEBI:195400"/>
    </reaction>
    <physiologicalReaction direction="left-to-right" evidence="4">
        <dbReference type="Rhea" id="RHEA:76700"/>
    </physiologicalReaction>
</comment>
<comment type="catalytic activity">
    <reaction evidence="4">
        <text>(15S)-hydroperoxy-(5Z,8Z,11Z,13E,17Z)-eicosapentaenoate + 2 glutathione = (15S)-hydroxy-(5Z,8Z,11Z,13E,17Z)-eicosapentaenoate + glutathione disulfide + H2O</text>
        <dbReference type="Rhea" id="RHEA:76707"/>
        <dbReference type="ChEBI" id="CHEBI:15377"/>
        <dbReference type="ChEBI" id="CHEBI:57925"/>
        <dbReference type="ChEBI" id="CHEBI:58297"/>
        <dbReference type="ChEBI" id="CHEBI:132087"/>
        <dbReference type="ChEBI" id="CHEBI:194369"/>
    </reaction>
    <physiologicalReaction direction="left-to-right" evidence="4">
        <dbReference type="Rhea" id="RHEA:76708"/>
    </physiologicalReaction>
</comment>
<comment type="catalytic activity">
    <reaction evidence="4">
        <text>(15S)-hydroperoxy-(11Z,13E)-eicosadienoate + 2 glutathione = (15S)-hydroxy-(11Z,13E)-eicosadienoate + glutathione disulfide + H2O</text>
        <dbReference type="Rhea" id="RHEA:76711"/>
        <dbReference type="ChEBI" id="CHEBI:15377"/>
        <dbReference type="ChEBI" id="CHEBI:57925"/>
        <dbReference type="ChEBI" id="CHEBI:58297"/>
        <dbReference type="ChEBI" id="CHEBI:144832"/>
        <dbReference type="ChEBI" id="CHEBI:195402"/>
    </reaction>
    <physiologicalReaction direction="left-to-right" evidence="4">
        <dbReference type="Rhea" id="RHEA:76712"/>
    </physiologicalReaction>
</comment>
<comment type="catalytic activity">
    <reaction evidence="4">
        <text>(17S)-hydroperoxy-(4Z,7Z,10Z,13Z,15E,19Z)-docosahexaenoate + 2 glutathione = (17S)-hydroxy-(4Z,7Z,10Z,13Z,15E,19Z)-docosahexaenoate + glutathione disulfide + H2O</text>
        <dbReference type="Rhea" id="RHEA:76715"/>
        <dbReference type="ChEBI" id="CHEBI:15377"/>
        <dbReference type="ChEBI" id="CHEBI:57925"/>
        <dbReference type="ChEBI" id="CHEBI:58297"/>
        <dbReference type="ChEBI" id="CHEBI:133795"/>
        <dbReference type="ChEBI" id="CHEBI:195403"/>
    </reaction>
    <physiologicalReaction direction="left-to-right" evidence="4">
        <dbReference type="Rhea" id="RHEA:76716"/>
    </physiologicalReaction>
</comment>
<comment type="subunit">
    <text evidence="5">Homotetramer. Interacts with MIEN1.</text>
</comment>
<comment type="subcellular location">
    <subcellularLocation>
        <location evidence="5">Cytoplasm</location>
    </subcellularLocation>
    <subcellularLocation>
        <location evidence="5">Mitochondrion</location>
    </subcellularLocation>
</comment>
<comment type="PTM">
    <text evidence="5">During periods of oxidative stress, Sec-52 may react with a superoxide radical, irreversibly lose hydroselenide and be converted to dehydroalanine.</text>
</comment>
<comment type="similarity">
    <text evidence="7">Belongs to the glutathione peroxidase family.</text>
</comment>
<organism>
    <name type="scientific">Bos taurus</name>
    <name type="common">Bovine</name>
    <dbReference type="NCBI Taxonomy" id="9913"/>
    <lineage>
        <taxon>Eukaryota</taxon>
        <taxon>Metazoa</taxon>
        <taxon>Chordata</taxon>
        <taxon>Craniata</taxon>
        <taxon>Vertebrata</taxon>
        <taxon>Euteleostomi</taxon>
        <taxon>Mammalia</taxon>
        <taxon>Eutheria</taxon>
        <taxon>Laurasiatheria</taxon>
        <taxon>Artiodactyla</taxon>
        <taxon>Ruminantia</taxon>
        <taxon>Pecora</taxon>
        <taxon>Bovidae</taxon>
        <taxon>Bovinae</taxon>
        <taxon>Bos</taxon>
    </lineage>
</organism>
<sequence>MCAAQRSAAALAAAAPRTVYAFSARPLAGGEPFNLSSLRGKVLLIENVASLUGTTVRDYTQMNDLQRRLGPRGLVVLGFPCNQFGHQENAKNEEILNCLKYVRPGGGFEPNFMLFEKCEVNGEKAHPLFAFLREVLPTPSDDATALMTDPKFITWSPVCRNDVSWNFEKFLVGPDGVPVRRYSRRFLTIDIEPDIETLLSQGASA</sequence>
<protein>
    <recommendedName>
        <fullName evidence="7">Glutathione peroxidase 1</fullName>
        <shortName>GPx-1</shortName>
        <shortName>GSHPx-1</shortName>
        <ecNumber evidence="4">1.11.1.9</ecNumber>
    </recommendedName>
    <alternativeName>
        <fullName>Cellular glutathione peroxidase</fullName>
    </alternativeName>
    <alternativeName>
        <fullName>Phospholipid-hydroperoxide glutathione peroxidase GPX1</fullName>
        <ecNumber evidence="4">1.11.1.12</ecNumber>
    </alternativeName>
</protein>
<feature type="chain" id="PRO_0000066608" description="Glutathione peroxidase 1">
    <location>
        <begin position="1"/>
        <end position="205"/>
    </location>
</feature>
<feature type="active site" evidence="2">
    <location>
        <position position="52"/>
    </location>
</feature>
<feature type="site" description="Not glycated" evidence="6">
    <location>
        <position position="41"/>
    </location>
</feature>
<feature type="site" description="Subject to oxidation and hydroselenide loss to dehydroalanine" evidence="1">
    <location>
        <position position="52"/>
    </location>
</feature>
<feature type="site" description="Not glycated" evidence="6">
    <location>
        <position position="91"/>
    </location>
</feature>
<feature type="site" description="Not glycated" evidence="6">
    <location>
        <position position="100"/>
    </location>
</feature>
<feature type="site" description="Not glycated" evidence="6">
    <location>
        <position position="124"/>
    </location>
</feature>
<feature type="site" description="Not glycated" evidence="6">
    <location>
        <position position="151"/>
    </location>
</feature>
<feature type="site" description="Not glycated" evidence="6">
    <location>
        <position position="169"/>
    </location>
</feature>
<feature type="non-standard amino acid" description="Selenocysteine" evidence="5">
    <location>
        <position position="52"/>
    </location>
</feature>
<feature type="modified residue" description="Phosphoserine" evidence="3">
    <location>
        <position position="37"/>
    </location>
</feature>
<feature type="modified residue" description="N6-acetyllysine; alternate" evidence="5">
    <location>
        <position position="91"/>
    </location>
</feature>
<feature type="modified residue" description="N6-succinyllysine; alternate" evidence="5">
    <location>
        <position position="91"/>
    </location>
</feature>
<feature type="modified residue" description="N6-acetyllysine; alternate" evidence="5">
    <location>
        <position position="117"/>
    </location>
</feature>
<feature type="modified residue" description="N6-succinyllysine; alternate" evidence="5">
    <location>
        <position position="117"/>
    </location>
</feature>
<feature type="modified residue" description="N6-acetyllysine" evidence="5">
    <location>
        <position position="124"/>
    </location>
</feature>
<feature type="modified residue" description="N6-acetyllysine; alternate" evidence="5">
    <location>
        <position position="151"/>
    </location>
</feature>
<feature type="modified residue" description="N6-succinyllysine; alternate" evidence="5">
    <location>
        <position position="151"/>
    </location>
</feature>
<feature type="modified residue" description="Phosphoserine" evidence="3">
    <location>
        <position position="200"/>
    </location>
</feature>
<feature type="modified residue" description="Phosphoserine" evidence="4">
    <location>
        <position position="204"/>
    </location>
</feature>
<feature type="glycosylation site" description="N-linked (Glc) (glycation) lysine; in vitro" evidence="6">
    <location>
        <position position="117"/>
    </location>
</feature>
<feature type="sequence conflict" description="In Ref. 2; AAI49309." evidence="7" ref="2">
    <original>L</original>
    <variation>P</variation>
    <location>
        <position position="96"/>
    </location>
</feature>
<feature type="helix" evidence="8">
    <location>
        <begin position="19"/>
        <end position="21"/>
    </location>
</feature>
<feature type="helix" evidence="8">
    <location>
        <begin position="35"/>
        <end position="38"/>
    </location>
</feature>
<feature type="strand" evidence="8">
    <location>
        <begin position="41"/>
        <end position="48"/>
    </location>
</feature>
<feature type="helix" evidence="8">
    <location>
        <begin position="55"/>
        <end position="69"/>
    </location>
</feature>
<feature type="helix" evidence="8">
    <location>
        <begin position="70"/>
        <end position="72"/>
    </location>
</feature>
<feature type="strand" evidence="8">
    <location>
        <begin position="74"/>
        <end position="80"/>
    </location>
</feature>
<feature type="turn" evidence="8">
    <location>
        <begin position="83"/>
        <end position="86"/>
    </location>
</feature>
<feature type="helix" evidence="8">
    <location>
        <begin position="92"/>
        <end position="94"/>
    </location>
</feature>
<feature type="helix" evidence="8">
    <location>
        <begin position="95"/>
        <end position="101"/>
    </location>
</feature>
<feature type="strand" evidence="8">
    <location>
        <begin position="111"/>
        <end position="115"/>
    </location>
</feature>
<feature type="strand" evidence="8">
    <location>
        <begin position="119"/>
        <end position="122"/>
    </location>
</feature>
<feature type="helix" evidence="8">
    <location>
        <begin position="127"/>
        <end position="135"/>
    </location>
</feature>
<feature type="helix" evidence="8">
    <location>
        <begin position="150"/>
        <end position="152"/>
    </location>
</feature>
<feature type="strand" evidence="8">
    <location>
        <begin position="155"/>
        <end position="157"/>
    </location>
</feature>
<feature type="strand" evidence="8">
    <location>
        <begin position="169"/>
        <end position="172"/>
    </location>
</feature>
<feature type="strand" evidence="8">
    <location>
        <begin position="178"/>
        <end position="182"/>
    </location>
</feature>
<feature type="helix" evidence="8">
    <location>
        <begin position="188"/>
        <end position="191"/>
    </location>
</feature>
<feature type="helix" evidence="8">
    <location>
        <begin position="192"/>
        <end position="199"/>
    </location>
</feature>